<accession>A5WV69</accession>
<dbReference type="EMBL" id="CR956623">
    <property type="protein sequence ID" value="CAN87907.1"/>
    <property type="molecule type" value="Genomic_DNA"/>
</dbReference>
<dbReference type="RefSeq" id="NP_001093558.1">
    <property type="nucleotide sequence ID" value="NM_001100088.1"/>
</dbReference>
<dbReference type="RefSeq" id="XP_005171197.1">
    <property type="nucleotide sequence ID" value="XM_005171140.3"/>
</dbReference>
<dbReference type="SMR" id="A5WV69"/>
<dbReference type="STRING" id="7955.ENSDARP00000075696"/>
<dbReference type="PaxDb" id="7955-ENSDARP00000075696"/>
<dbReference type="Ensembl" id="ENSDART00000081253">
    <property type="protein sequence ID" value="ENSDARP00000075696"/>
    <property type="gene ID" value="ENSDARG00000058410"/>
</dbReference>
<dbReference type="Ensembl" id="ENSDART00000140434">
    <property type="protein sequence ID" value="ENSDARP00000122411"/>
    <property type="gene ID" value="ENSDARG00000058410"/>
</dbReference>
<dbReference type="GeneID" id="100004736"/>
<dbReference type="KEGG" id="dre:100004736"/>
<dbReference type="AGR" id="ZFIN:ZDB-GENE-070705-18"/>
<dbReference type="CTD" id="100004736"/>
<dbReference type="ZFIN" id="ZDB-GENE-070705-18">
    <property type="gene designation" value="acbd5b"/>
</dbReference>
<dbReference type="eggNOG" id="KOG0817">
    <property type="taxonomic scope" value="Eukaryota"/>
</dbReference>
<dbReference type="InParanoid" id="A5WV69"/>
<dbReference type="OMA" id="PYMQFNG"/>
<dbReference type="OrthoDB" id="71307at2759"/>
<dbReference type="PhylomeDB" id="A5WV69"/>
<dbReference type="PRO" id="PR:A5WV69"/>
<dbReference type="Proteomes" id="UP000000437">
    <property type="component" value="Chromosome 2"/>
</dbReference>
<dbReference type="Bgee" id="ENSDARG00000058410">
    <property type="expression patterns" value="Expressed in retina and 5 other cell types or tissues"/>
</dbReference>
<dbReference type="GO" id="GO:0005737">
    <property type="term" value="C:cytoplasm"/>
    <property type="evidence" value="ECO:0000318"/>
    <property type="project" value="GO_Central"/>
</dbReference>
<dbReference type="GO" id="GO:0016020">
    <property type="term" value="C:membrane"/>
    <property type="evidence" value="ECO:0007669"/>
    <property type="project" value="UniProtKB-SubCell"/>
</dbReference>
<dbReference type="GO" id="GO:0005777">
    <property type="term" value="C:peroxisome"/>
    <property type="evidence" value="ECO:0000318"/>
    <property type="project" value="GO_Central"/>
</dbReference>
<dbReference type="GO" id="GO:0000062">
    <property type="term" value="F:fatty-acyl-CoA binding"/>
    <property type="evidence" value="ECO:0000318"/>
    <property type="project" value="GO_Central"/>
</dbReference>
<dbReference type="GO" id="GO:0006631">
    <property type="term" value="P:fatty acid metabolic process"/>
    <property type="evidence" value="ECO:0000318"/>
    <property type="project" value="GO_Central"/>
</dbReference>
<dbReference type="FunFam" id="1.20.80.10:FF:000010">
    <property type="entry name" value="Acyl-CoA-binding domain-containing protein 5"/>
    <property type="match status" value="1"/>
</dbReference>
<dbReference type="Gene3D" id="1.20.80.10">
    <property type="match status" value="1"/>
</dbReference>
<dbReference type="InterPro" id="IPR022408">
    <property type="entry name" value="Acyl-CoA-binding_prot_CS"/>
</dbReference>
<dbReference type="InterPro" id="IPR000582">
    <property type="entry name" value="Acyl-CoA-binding_protein"/>
</dbReference>
<dbReference type="InterPro" id="IPR035984">
    <property type="entry name" value="Acyl-CoA-binding_sf"/>
</dbReference>
<dbReference type="InterPro" id="IPR014352">
    <property type="entry name" value="FERM/acyl-CoA-bd_prot_sf"/>
</dbReference>
<dbReference type="PANTHER" id="PTHR23310:SF6">
    <property type="entry name" value="ACYL-COA-BINDING DOMAIN-CONTAINING PROTEIN 5"/>
    <property type="match status" value="1"/>
</dbReference>
<dbReference type="PANTHER" id="PTHR23310">
    <property type="entry name" value="ACYL-COA-BINDING PROTEIN, ACBP"/>
    <property type="match status" value="1"/>
</dbReference>
<dbReference type="Pfam" id="PF00887">
    <property type="entry name" value="ACBP"/>
    <property type="match status" value="1"/>
</dbReference>
<dbReference type="PRINTS" id="PR00689">
    <property type="entry name" value="ACOABINDINGP"/>
</dbReference>
<dbReference type="SUPFAM" id="SSF47027">
    <property type="entry name" value="Acyl-CoA binding protein"/>
    <property type="match status" value="1"/>
</dbReference>
<dbReference type="PROSITE" id="PS00880">
    <property type="entry name" value="ACB_1"/>
    <property type="match status" value="1"/>
</dbReference>
<dbReference type="PROSITE" id="PS51228">
    <property type="entry name" value="ACB_2"/>
    <property type="match status" value="1"/>
</dbReference>
<organism>
    <name type="scientific">Danio rerio</name>
    <name type="common">Zebrafish</name>
    <name type="synonym">Brachydanio rerio</name>
    <dbReference type="NCBI Taxonomy" id="7955"/>
    <lineage>
        <taxon>Eukaryota</taxon>
        <taxon>Metazoa</taxon>
        <taxon>Chordata</taxon>
        <taxon>Craniata</taxon>
        <taxon>Vertebrata</taxon>
        <taxon>Euteleostomi</taxon>
        <taxon>Actinopterygii</taxon>
        <taxon>Neopterygii</taxon>
        <taxon>Teleostei</taxon>
        <taxon>Ostariophysi</taxon>
        <taxon>Cypriniformes</taxon>
        <taxon>Danionidae</taxon>
        <taxon>Danioninae</taxon>
        <taxon>Danio</taxon>
    </lineage>
</organism>
<protein>
    <recommendedName>
        <fullName>Acyl-CoA-binding domain-containing protein 5-B</fullName>
    </recommendedName>
</protein>
<sequence length="410" mass="45788">MILRGMEDSKSAQKRFEAAVKVIRSLPEDGSYDLSDDMLVLFYSYYKQATEGPCNTLKPNSWDPIGKAKWEAWKDLGNMSKDQAMTEYVQEIQLIIETLPVTDRMAELLDALDPFYEIVEDDDDDDDEGVSKAAPLFTGSTNADKDAERDEEVESESKEGNLDDYMELVEKQKDLSSTTGEKGSLLVFNRSEENSISSLTDGTHSSLNTVDDEEELVYDGSDDEMDSDSMDKPATPEKGSGVRSVRLADGSVVGANMQHGGNREPQCGSQDGKPQGLISPVPHPPTLGTVRNDRISACSGRERGCQGDGGQRGETADRMDKQAINTQITTILSELEDNMQDVLRRLTTLEQLTASQAEISPSKTWHSDKPKKRLSWWPLNSSPFTAVLTVLWPFAVHWLVQFYLQRRRRR</sequence>
<keyword id="KW-0175">Coiled coil</keyword>
<keyword id="KW-0446">Lipid-binding</keyword>
<keyword id="KW-0472">Membrane</keyword>
<keyword id="KW-1185">Reference proteome</keyword>
<keyword id="KW-0812">Transmembrane</keyword>
<keyword id="KW-1133">Transmembrane helix</keyword>
<keyword id="KW-0813">Transport</keyword>
<gene>
    <name type="primary">acbd5b</name>
    <name type="ORF">si:ch211-112d19.6</name>
</gene>
<reference key="1">
    <citation type="journal article" date="2013" name="Nature">
        <title>The zebrafish reference genome sequence and its relationship to the human genome.</title>
        <authorList>
            <person name="Howe K."/>
            <person name="Clark M.D."/>
            <person name="Torroja C.F."/>
            <person name="Torrance J."/>
            <person name="Berthelot C."/>
            <person name="Muffato M."/>
            <person name="Collins J.E."/>
            <person name="Humphray S."/>
            <person name="McLaren K."/>
            <person name="Matthews L."/>
            <person name="McLaren S."/>
            <person name="Sealy I."/>
            <person name="Caccamo M."/>
            <person name="Churcher C."/>
            <person name="Scott C."/>
            <person name="Barrett J.C."/>
            <person name="Koch R."/>
            <person name="Rauch G.J."/>
            <person name="White S."/>
            <person name="Chow W."/>
            <person name="Kilian B."/>
            <person name="Quintais L.T."/>
            <person name="Guerra-Assuncao J.A."/>
            <person name="Zhou Y."/>
            <person name="Gu Y."/>
            <person name="Yen J."/>
            <person name="Vogel J.H."/>
            <person name="Eyre T."/>
            <person name="Redmond S."/>
            <person name="Banerjee R."/>
            <person name="Chi J."/>
            <person name="Fu B."/>
            <person name="Langley E."/>
            <person name="Maguire S.F."/>
            <person name="Laird G.K."/>
            <person name="Lloyd D."/>
            <person name="Kenyon E."/>
            <person name="Donaldson S."/>
            <person name="Sehra H."/>
            <person name="Almeida-King J."/>
            <person name="Loveland J."/>
            <person name="Trevanion S."/>
            <person name="Jones M."/>
            <person name="Quail M."/>
            <person name="Willey D."/>
            <person name="Hunt A."/>
            <person name="Burton J."/>
            <person name="Sims S."/>
            <person name="McLay K."/>
            <person name="Plumb B."/>
            <person name="Davis J."/>
            <person name="Clee C."/>
            <person name="Oliver K."/>
            <person name="Clark R."/>
            <person name="Riddle C."/>
            <person name="Elliot D."/>
            <person name="Threadgold G."/>
            <person name="Harden G."/>
            <person name="Ware D."/>
            <person name="Begum S."/>
            <person name="Mortimore B."/>
            <person name="Kerry G."/>
            <person name="Heath P."/>
            <person name="Phillimore B."/>
            <person name="Tracey A."/>
            <person name="Corby N."/>
            <person name="Dunn M."/>
            <person name="Johnson C."/>
            <person name="Wood J."/>
            <person name="Clark S."/>
            <person name="Pelan S."/>
            <person name="Griffiths G."/>
            <person name="Smith M."/>
            <person name="Glithero R."/>
            <person name="Howden P."/>
            <person name="Barker N."/>
            <person name="Lloyd C."/>
            <person name="Stevens C."/>
            <person name="Harley J."/>
            <person name="Holt K."/>
            <person name="Panagiotidis G."/>
            <person name="Lovell J."/>
            <person name="Beasley H."/>
            <person name="Henderson C."/>
            <person name="Gordon D."/>
            <person name="Auger K."/>
            <person name="Wright D."/>
            <person name="Collins J."/>
            <person name="Raisen C."/>
            <person name="Dyer L."/>
            <person name="Leung K."/>
            <person name="Robertson L."/>
            <person name="Ambridge K."/>
            <person name="Leongamornlert D."/>
            <person name="McGuire S."/>
            <person name="Gilderthorp R."/>
            <person name="Griffiths C."/>
            <person name="Manthravadi D."/>
            <person name="Nichol S."/>
            <person name="Barker G."/>
            <person name="Whitehead S."/>
            <person name="Kay M."/>
            <person name="Brown J."/>
            <person name="Murnane C."/>
            <person name="Gray E."/>
            <person name="Humphries M."/>
            <person name="Sycamore N."/>
            <person name="Barker D."/>
            <person name="Saunders D."/>
            <person name="Wallis J."/>
            <person name="Babbage A."/>
            <person name="Hammond S."/>
            <person name="Mashreghi-Mohammadi M."/>
            <person name="Barr L."/>
            <person name="Martin S."/>
            <person name="Wray P."/>
            <person name="Ellington A."/>
            <person name="Matthews N."/>
            <person name="Ellwood M."/>
            <person name="Woodmansey R."/>
            <person name="Clark G."/>
            <person name="Cooper J."/>
            <person name="Tromans A."/>
            <person name="Grafham D."/>
            <person name="Skuce C."/>
            <person name="Pandian R."/>
            <person name="Andrews R."/>
            <person name="Harrison E."/>
            <person name="Kimberley A."/>
            <person name="Garnett J."/>
            <person name="Fosker N."/>
            <person name="Hall R."/>
            <person name="Garner P."/>
            <person name="Kelly D."/>
            <person name="Bird C."/>
            <person name="Palmer S."/>
            <person name="Gehring I."/>
            <person name="Berger A."/>
            <person name="Dooley C.M."/>
            <person name="Ersan-Urun Z."/>
            <person name="Eser C."/>
            <person name="Geiger H."/>
            <person name="Geisler M."/>
            <person name="Karotki L."/>
            <person name="Kirn A."/>
            <person name="Konantz J."/>
            <person name="Konantz M."/>
            <person name="Oberlander M."/>
            <person name="Rudolph-Geiger S."/>
            <person name="Teucke M."/>
            <person name="Lanz C."/>
            <person name="Raddatz G."/>
            <person name="Osoegawa K."/>
            <person name="Zhu B."/>
            <person name="Rapp A."/>
            <person name="Widaa S."/>
            <person name="Langford C."/>
            <person name="Yang F."/>
            <person name="Schuster S.C."/>
            <person name="Carter N.P."/>
            <person name="Harrow J."/>
            <person name="Ning Z."/>
            <person name="Herrero J."/>
            <person name="Searle S.M."/>
            <person name="Enright A."/>
            <person name="Geisler R."/>
            <person name="Plasterk R.H."/>
            <person name="Lee C."/>
            <person name="Westerfield M."/>
            <person name="de Jong P.J."/>
            <person name="Zon L.I."/>
            <person name="Postlethwait J.H."/>
            <person name="Nusslein-Volhard C."/>
            <person name="Hubbard T.J."/>
            <person name="Roest Crollius H."/>
            <person name="Rogers J."/>
            <person name="Stemple D.L."/>
        </authorList>
    </citation>
    <scope>NUCLEOTIDE SEQUENCE [LARGE SCALE GENOMIC DNA]</scope>
    <source>
        <strain>Tuebingen</strain>
    </source>
</reference>
<proteinExistence type="inferred from homology"/>
<comment type="function">
    <text evidence="1">Binds medium- and long-chain acyl-CoA esters.</text>
</comment>
<comment type="subcellular location">
    <subcellularLocation>
        <location evidence="2">Membrane</location>
        <topology evidence="2">Single-pass membrane protein</topology>
    </subcellularLocation>
</comment>
<feature type="chain" id="PRO_0000397927" description="Acyl-CoA-binding domain-containing protein 5-B">
    <location>
        <begin position="1"/>
        <end position="410"/>
    </location>
</feature>
<feature type="transmembrane region" evidence="2">
    <location>
        <begin position="382"/>
        <end position="404"/>
    </location>
</feature>
<feature type="domain" description="ACB" evidence="3">
    <location>
        <begin position="12"/>
        <end position="101"/>
    </location>
</feature>
<feature type="region of interest" description="Disordered" evidence="4">
    <location>
        <begin position="119"/>
        <end position="165"/>
    </location>
</feature>
<feature type="region of interest" description="Disordered" evidence="4">
    <location>
        <begin position="221"/>
        <end position="242"/>
    </location>
</feature>
<feature type="region of interest" description="Disordered" evidence="4">
    <location>
        <begin position="254"/>
        <end position="320"/>
    </location>
</feature>
<feature type="coiled-coil region" evidence="2">
    <location>
        <begin position="326"/>
        <end position="355"/>
    </location>
</feature>
<feature type="compositionally biased region" description="Acidic residues" evidence="4">
    <location>
        <begin position="119"/>
        <end position="128"/>
    </location>
</feature>
<feature type="binding site" evidence="1">
    <location>
        <begin position="23"/>
        <end position="32"/>
    </location>
    <ligand>
        <name>an acyl-CoA</name>
        <dbReference type="ChEBI" id="CHEBI:58342"/>
    </ligand>
</feature>
<feature type="binding site" evidence="1">
    <location>
        <begin position="43"/>
        <end position="47"/>
    </location>
    <ligand>
        <name>an acyl-CoA</name>
        <dbReference type="ChEBI" id="CHEBI:58342"/>
    </ligand>
</feature>
<feature type="binding site" evidence="1">
    <location>
        <position position="69"/>
    </location>
    <ligand>
        <name>an acyl-CoA</name>
        <dbReference type="ChEBI" id="CHEBI:58342"/>
    </ligand>
</feature>
<feature type="binding site" evidence="1">
    <location>
        <position position="88"/>
    </location>
    <ligand>
        <name>an acyl-CoA</name>
        <dbReference type="ChEBI" id="CHEBI:58342"/>
    </ligand>
</feature>
<name>ACB5B_DANRE</name>
<evidence type="ECO:0000250" key="1"/>
<evidence type="ECO:0000255" key="2"/>
<evidence type="ECO:0000255" key="3">
    <source>
        <dbReference type="PROSITE-ProRule" id="PRU00573"/>
    </source>
</evidence>
<evidence type="ECO:0000256" key="4">
    <source>
        <dbReference type="SAM" id="MobiDB-lite"/>
    </source>
</evidence>